<keyword id="KW-0002">3D-structure</keyword>
<keyword id="KW-0963">Cytoplasm</keyword>
<keyword id="KW-0903">Direct protein sequencing</keyword>
<keyword id="KW-0396">Initiation factor</keyword>
<keyword id="KW-0648">Protein biosynthesis</keyword>
<reference key="1">
    <citation type="journal article" date="1989" name="Mol. Gen. Genet.">
        <title>Cloning and characterization of a gene cluster from Bacillus stearothermophilus comprising infC, rpmI and rplT.</title>
        <authorList>
            <person name="Pon C.L."/>
            <person name="Brombach M."/>
            <person name="Thamm S."/>
            <person name="Gualerzi C.O."/>
        </authorList>
    </citation>
    <scope>NUCLEOTIDE SEQUENCE [GENOMIC DNA]</scope>
</reference>
<reference key="2">
    <citation type="journal article" date="1983" name="FEBS Lett.">
        <title>The primary structure of initiation factor IF3 from Bacillus stearothermophilus.</title>
        <authorList>
            <person name="Kimura M."/>
            <person name="Ernst H."/>
            <person name="Appelt K."/>
        </authorList>
    </citation>
    <scope>PROTEIN SEQUENCE OF 2-172</scope>
    <source>
        <strain>ATCC 29609 / DSM 2027 / NCA 1503 / NCIMB 8924</strain>
    </source>
</reference>
<reference key="3">
    <citation type="journal article" date="1991" name="Biochimie">
        <title>Site-directed mutagenesis and NMR spectroscopic approaches to the elucidation of the structure-function relationships in translation initiation factors IF1 and IF3.</title>
        <authorList>
            <person name="Spurio R."/>
            <person name="Paci M."/>
            <person name="Pawlik R.T."/>
            <person name="la Teana A."/>
            <person name="Digiacco B.V."/>
            <person name="Pon C.L."/>
            <person name="Gualerzi C.O."/>
        </authorList>
    </citation>
    <scope>STRUCTURE BY NMR</scope>
    <scope>MUTAGENESIS</scope>
</reference>
<reference key="4">
    <citation type="journal article" date="1998" name="J. Mol. Biol.">
        <title>On the global architecture of initiation factor IF3: a comparative study of the linker regions from the Escherichia coli protein and the Bacillus stearothermophilus protein.</title>
        <authorList>
            <person name="Hua Y."/>
            <person name="Raleigh D.P."/>
        </authorList>
    </citation>
    <scope>STRUCTURE BY NMR</scope>
</reference>
<reference key="5">
    <citation type="journal article" date="1995" name="EMBO J.">
        <title>X-ray crystallography shows that translational initiation factor IF3 consists of two compact alpha/beta domains linked by an alpha-helix.</title>
        <authorList>
            <person name="Biou V."/>
            <person name="Shu F."/>
            <person name="Ramakrishnan V."/>
        </authorList>
    </citation>
    <scope>X-RAY CRYSTALLOGRAPHY (1.8 ANGSTROMS)</scope>
</reference>
<dbReference type="EMBL" id="X16188">
    <property type="protein sequence ID" value="CAA34312.1"/>
    <property type="molecule type" value="Genomic_DNA"/>
</dbReference>
<dbReference type="PIR" id="S05346">
    <property type="entry name" value="FIBS3F"/>
</dbReference>
<dbReference type="PDB" id="1TIF">
    <property type="method" value="X-ray"/>
    <property type="resolution" value="1.80 A"/>
    <property type="chains" value="A=1-78"/>
</dbReference>
<dbReference type="PDB" id="1TIG">
    <property type="method" value="X-ray"/>
    <property type="resolution" value="2.00 A"/>
    <property type="chains" value="A=79-172"/>
</dbReference>
<dbReference type="PDB" id="5ME0">
    <property type="method" value="EM"/>
    <property type="resolution" value="13.50 A"/>
    <property type="chains" value="Y=2-172"/>
</dbReference>
<dbReference type="PDB" id="5ME1">
    <property type="method" value="EM"/>
    <property type="resolution" value="13.50 A"/>
    <property type="chains" value="Y=2-172"/>
</dbReference>
<dbReference type="PDBsum" id="1TIF"/>
<dbReference type="PDBsum" id="1TIG"/>
<dbReference type="PDBsum" id="5ME0"/>
<dbReference type="PDBsum" id="5ME1"/>
<dbReference type="EMDB" id="EMD-3494"/>
<dbReference type="EMDB" id="EMD-3495"/>
<dbReference type="SMR" id="P03000"/>
<dbReference type="IntAct" id="P03000">
    <property type="interactions" value="1"/>
</dbReference>
<dbReference type="EvolutionaryTrace" id="P03000"/>
<dbReference type="GO" id="GO:0005829">
    <property type="term" value="C:cytosol"/>
    <property type="evidence" value="ECO:0007669"/>
    <property type="project" value="TreeGrafter"/>
</dbReference>
<dbReference type="GO" id="GO:0016020">
    <property type="term" value="C:membrane"/>
    <property type="evidence" value="ECO:0007669"/>
    <property type="project" value="TreeGrafter"/>
</dbReference>
<dbReference type="GO" id="GO:0043022">
    <property type="term" value="F:ribosome binding"/>
    <property type="evidence" value="ECO:0007669"/>
    <property type="project" value="TreeGrafter"/>
</dbReference>
<dbReference type="GO" id="GO:0003743">
    <property type="term" value="F:translation initiation factor activity"/>
    <property type="evidence" value="ECO:0007669"/>
    <property type="project" value="UniProtKB-UniRule"/>
</dbReference>
<dbReference type="GO" id="GO:0032790">
    <property type="term" value="P:ribosome disassembly"/>
    <property type="evidence" value="ECO:0007669"/>
    <property type="project" value="TreeGrafter"/>
</dbReference>
<dbReference type="FunFam" id="3.10.20.80:FF:000001">
    <property type="entry name" value="Translation initiation factor IF-3"/>
    <property type="match status" value="1"/>
</dbReference>
<dbReference type="FunFam" id="3.30.110.10:FF:000001">
    <property type="entry name" value="Translation initiation factor IF-3"/>
    <property type="match status" value="1"/>
</dbReference>
<dbReference type="Gene3D" id="3.30.110.10">
    <property type="entry name" value="Translation initiation factor 3 (IF-3), C-terminal domain"/>
    <property type="match status" value="1"/>
</dbReference>
<dbReference type="Gene3D" id="3.10.20.80">
    <property type="entry name" value="Translation initiation factor 3 (IF-3), N-terminal domain"/>
    <property type="match status" value="1"/>
</dbReference>
<dbReference type="HAMAP" id="MF_00080">
    <property type="entry name" value="IF_3"/>
    <property type="match status" value="1"/>
</dbReference>
<dbReference type="InterPro" id="IPR036788">
    <property type="entry name" value="T_IF-3_C_sf"/>
</dbReference>
<dbReference type="InterPro" id="IPR036787">
    <property type="entry name" value="T_IF-3_N_sf"/>
</dbReference>
<dbReference type="InterPro" id="IPR019813">
    <property type="entry name" value="Translation_initiation_fac3_CS"/>
</dbReference>
<dbReference type="InterPro" id="IPR001288">
    <property type="entry name" value="Translation_initiation_fac_3"/>
</dbReference>
<dbReference type="InterPro" id="IPR019815">
    <property type="entry name" value="Translation_initiation_fac_3_C"/>
</dbReference>
<dbReference type="InterPro" id="IPR019814">
    <property type="entry name" value="Translation_initiation_fac_3_N"/>
</dbReference>
<dbReference type="NCBIfam" id="TIGR00168">
    <property type="entry name" value="infC"/>
    <property type="match status" value="1"/>
</dbReference>
<dbReference type="PANTHER" id="PTHR10938">
    <property type="entry name" value="TRANSLATION INITIATION FACTOR IF-3"/>
    <property type="match status" value="1"/>
</dbReference>
<dbReference type="PANTHER" id="PTHR10938:SF0">
    <property type="entry name" value="TRANSLATION INITIATION FACTOR IF-3, MITOCHONDRIAL"/>
    <property type="match status" value="1"/>
</dbReference>
<dbReference type="Pfam" id="PF00707">
    <property type="entry name" value="IF3_C"/>
    <property type="match status" value="1"/>
</dbReference>
<dbReference type="Pfam" id="PF05198">
    <property type="entry name" value="IF3_N"/>
    <property type="match status" value="1"/>
</dbReference>
<dbReference type="SUPFAM" id="SSF55200">
    <property type="entry name" value="Translation initiation factor IF3, C-terminal domain"/>
    <property type="match status" value="1"/>
</dbReference>
<dbReference type="SUPFAM" id="SSF54364">
    <property type="entry name" value="Translation initiation factor IF3, N-terminal domain"/>
    <property type="match status" value="1"/>
</dbReference>
<dbReference type="PROSITE" id="PS00938">
    <property type="entry name" value="IF3"/>
    <property type="match status" value="1"/>
</dbReference>
<comment type="function">
    <text>IF-3 binds to the 30S ribosomal subunit and shifts the equilibrium between 70S ribosomes and their 50S and 30S subunits in favor of the free subunits, thus enhancing the availability of 30S subunits on which protein synthesis initiation begins.</text>
</comment>
<comment type="subunit">
    <text>Monomer.</text>
</comment>
<comment type="subcellular location">
    <subcellularLocation>
        <location>Cytoplasm</location>
    </subcellularLocation>
</comment>
<comment type="similarity">
    <text evidence="1">Belongs to the IF-3 family.</text>
</comment>
<gene>
    <name evidence="1" type="primary">infC</name>
</gene>
<name>IF3_GEOSE</name>
<protein>
    <recommendedName>
        <fullName evidence="1">Translation initiation factor IF-3</fullName>
    </recommendedName>
</protein>
<sequence>MSKDFIINEQIRAREVRLIDQNGDQLGIKSKQEALEIAARRNLDLVLVAPNAKPPVCRIMDYGKFRFEQQKKEKEARKKQKVINVKEVRLSPTIEEHDFNTKLRNARKFLEKGDKVKATIRFKGRAITHKEIGQRVLDRLSEACADIAVVETAPKMDGRNMFLVLAPKNDNK</sequence>
<evidence type="ECO:0000255" key="1">
    <source>
        <dbReference type="HAMAP-Rule" id="MF_00080"/>
    </source>
</evidence>
<evidence type="ECO:0000269" key="2">
    <source>
    </source>
</evidence>
<evidence type="ECO:0007829" key="3">
    <source>
        <dbReference type="PDB" id="1TIF"/>
    </source>
</evidence>
<evidence type="ECO:0007829" key="4">
    <source>
        <dbReference type="PDB" id="1TIG"/>
    </source>
</evidence>
<accession>P03000</accession>
<proteinExistence type="evidence at protein level"/>
<feature type="initiator methionine" description="Removed" evidence="2">
    <location>
        <position position="1"/>
    </location>
</feature>
<feature type="chain" id="PRO_0000177481" description="Translation initiation factor IF-3">
    <location>
        <begin position="2"/>
        <end position="172"/>
    </location>
</feature>
<feature type="helix" evidence="3">
    <location>
        <begin position="8"/>
        <end position="10"/>
    </location>
</feature>
<feature type="strand" evidence="3">
    <location>
        <begin position="14"/>
        <end position="19"/>
    </location>
</feature>
<feature type="strand" evidence="3">
    <location>
        <begin position="25"/>
        <end position="30"/>
    </location>
</feature>
<feature type="helix" evidence="3">
    <location>
        <begin position="31"/>
        <end position="40"/>
    </location>
</feature>
<feature type="strand" evidence="3">
    <location>
        <begin position="44"/>
        <end position="49"/>
    </location>
</feature>
<feature type="strand" evidence="3">
    <location>
        <begin position="52"/>
        <end position="54"/>
    </location>
</feature>
<feature type="strand" evidence="3">
    <location>
        <begin position="56"/>
        <end position="60"/>
    </location>
</feature>
<feature type="helix" evidence="3">
    <location>
        <begin position="62"/>
        <end position="75"/>
    </location>
</feature>
<feature type="strand" evidence="4">
    <location>
        <begin position="85"/>
        <end position="90"/>
    </location>
</feature>
<feature type="helix" evidence="4">
    <location>
        <begin position="96"/>
        <end position="111"/>
    </location>
</feature>
<feature type="strand" evidence="4">
    <location>
        <begin position="115"/>
        <end position="121"/>
    </location>
</feature>
<feature type="helix" evidence="4">
    <location>
        <begin position="129"/>
        <end position="143"/>
    </location>
</feature>
<feature type="turn" evidence="4">
    <location>
        <begin position="144"/>
        <end position="147"/>
    </location>
</feature>
<feature type="strand" evidence="4">
    <location>
        <begin position="148"/>
        <end position="157"/>
    </location>
</feature>
<feature type="strand" evidence="4">
    <location>
        <begin position="160"/>
        <end position="168"/>
    </location>
</feature>
<organism>
    <name type="scientific">Geobacillus stearothermophilus</name>
    <name type="common">Bacillus stearothermophilus</name>
    <dbReference type="NCBI Taxonomy" id="1422"/>
    <lineage>
        <taxon>Bacteria</taxon>
        <taxon>Bacillati</taxon>
        <taxon>Bacillota</taxon>
        <taxon>Bacilli</taxon>
        <taxon>Bacillales</taxon>
        <taxon>Anoxybacillaceae</taxon>
        <taxon>Geobacillus</taxon>
    </lineage>
</organism>